<sequence length="449" mass="49668">MANVVENLGKLERRVTISLPKDVVQKEIDARIQKLAKNVRMPGFRPGKVPLKMVAQQYAGQVEAEVLSDKIGQEFFTISRSENLRVAGQPSFAPKQDAAQEGAYAFDATFEVYPEVKIGDLATAEVERSTTTIGDAEIDRTLDILRKQRVHFHARGEGGEHGDGGADTSAQNGDRVTVDFVGKIDGVAFQGGTAEDFVFVLGEGRMLPEFETAALGLKTGEAREFDLKFPDDYHGKDVAGKTAQFTVTMKKVEWPHLPAIDADFAKSLGIEDGDLTKMREEIKENLGREAKRRTQSIVKNQVMDALLKISELDVPKALIEQDQQRLVEMARQDLAQRGVPNAKDAPIPVEMFAEQAERRVKLGLVLAELVKANGLEAKPEQIRAEVDEFAKSYEDPKEVVRWYYSNQQRLAEMEAFVVESNVVDFVLGKAKVTDKEVSFEALASATAQA</sequence>
<proteinExistence type="inferred from homology"/>
<keyword id="KW-0131">Cell cycle</keyword>
<keyword id="KW-0132">Cell division</keyword>
<keyword id="KW-0143">Chaperone</keyword>
<keyword id="KW-0963">Cytoplasm</keyword>
<keyword id="KW-0413">Isomerase</keyword>
<keyword id="KW-0697">Rotamase</keyword>
<gene>
    <name evidence="1" type="primary">tig</name>
    <name type="ordered locus">BTH_I2118</name>
</gene>
<comment type="function">
    <text evidence="1">Involved in protein export. Acts as a chaperone by maintaining the newly synthesized protein in an open conformation. Functions as a peptidyl-prolyl cis-trans isomerase.</text>
</comment>
<comment type="catalytic activity">
    <reaction evidence="1">
        <text>[protein]-peptidylproline (omega=180) = [protein]-peptidylproline (omega=0)</text>
        <dbReference type="Rhea" id="RHEA:16237"/>
        <dbReference type="Rhea" id="RHEA-COMP:10747"/>
        <dbReference type="Rhea" id="RHEA-COMP:10748"/>
        <dbReference type="ChEBI" id="CHEBI:83833"/>
        <dbReference type="ChEBI" id="CHEBI:83834"/>
        <dbReference type="EC" id="5.2.1.8"/>
    </reaction>
</comment>
<comment type="subcellular location">
    <subcellularLocation>
        <location>Cytoplasm</location>
    </subcellularLocation>
    <text evidence="1">About half TF is bound to the ribosome near the polypeptide exit tunnel while the other half is free in the cytoplasm.</text>
</comment>
<comment type="domain">
    <text evidence="1">Consists of 3 domains; the N-terminus binds the ribosome, the middle domain has PPIase activity, while the C-terminus has intrinsic chaperone activity on its own.</text>
</comment>
<comment type="similarity">
    <text evidence="1">Belongs to the FKBP-type PPIase family. Tig subfamily.</text>
</comment>
<name>TIG_BURTA</name>
<reference key="1">
    <citation type="journal article" date="2005" name="BMC Genomics">
        <title>Bacterial genome adaptation to niches: divergence of the potential virulence genes in three Burkholderia species of different survival strategies.</title>
        <authorList>
            <person name="Kim H.S."/>
            <person name="Schell M.A."/>
            <person name="Yu Y."/>
            <person name="Ulrich R.L."/>
            <person name="Sarria S.H."/>
            <person name="Nierman W.C."/>
            <person name="DeShazer D."/>
        </authorList>
    </citation>
    <scope>NUCLEOTIDE SEQUENCE [LARGE SCALE GENOMIC DNA]</scope>
    <source>
        <strain>ATCC 700388 / DSM 13276 / CCUG 48851 / CIP 106301 / E264</strain>
    </source>
</reference>
<protein>
    <recommendedName>
        <fullName evidence="1">Trigger factor</fullName>
        <shortName evidence="1">TF</shortName>
        <ecNumber evidence="1">5.2.1.8</ecNumber>
    </recommendedName>
    <alternativeName>
        <fullName evidence="1">PPIase</fullName>
    </alternativeName>
</protein>
<evidence type="ECO:0000255" key="1">
    <source>
        <dbReference type="HAMAP-Rule" id="MF_00303"/>
    </source>
</evidence>
<organism>
    <name type="scientific">Burkholderia thailandensis (strain ATCC 700388 / DSM 13276 / CCUG 48851 / CIP 106301 / E264)</name>
    <dbReference type="NCBI Taxonomy" id="271848"/>
    <lineage>
        <taxon>Bacteria</taxon>
        <taxon>Pseudomonadati</taxon>
        <taxon>Pseudomonadota</taxon>
        <taxon>Betaproteobacteria</taxon>
        <taxon>Burkholderiales</taxon>
        <taxon>Burkholderiaceae</taxon>
        <taxon>Burkholderia</taxon>
        <taxon>pseudomallei group</taxon>
    </lineage>
</organism>
<dbReference type="EC" id="5.2.1.8" evidence="1"/>
<dbReference type="EMBL" id="CP000086">
    <property type="protein sequence ID" value="ABC38116.1"/>
    <property type="molecule type" value="Genomic_DNA"/>
</dbReference>
<dbReference type="RefSeq" id="WP_009890606.1">
    <property type="nucleotide sequence ID" value="NZ_CP008785.1"/>
</dbReference>
<dbReference type="SMR" id="Q2SWQ8"/>
<dbReference type="GeneID" id="45121842"/>
<dbReference type="KEGG" id="bte:BTH_I2118"/>
<dbReference type="HOGENOM" id="CLU_033058_2_0_4"/>
<dbReference type="Proteomes" id="UP000001930">
    <property type="component" value="Chromosome I"/>
</dbReference>
<dbReference type="GO" id="GO:0005737">
    <property type="term" value="C:cytoplasm"/>
    <property type="evidence" value="ECO:0007669"/>
    <property type="project" value="UniProtKB-SubCell"/>
</dbReference>
<dbReference type="GO" id="GO:0003755">
    <property type="term" value="F:peptidyl-prolyl cis-trans isomerase activity"/>
    <property type="evidence" value="ECO:0007669"/>
    <property type="project" value="UniProtKB-UniRule"/>
</dbReference>
<dbReference type="GO" id="GO:0044183">
    <property type="term" value="F:protein folding chaperone"/>
    <property type="evidence" value="ECO:0007669"/>
    <property type="project" value="TreeGrafter"/>
</dbReference>
<dbReference type="GO" id="GO:0043022">
    <property type="term" value="F:ribosome binding"/>
    <property type="evidence" value="ECO:0007669"/>
    <property type="project" value="TreeGrafter"/>
</dbReference>
<dbReference type="GO" id="GO:0051083">
    <property type="term" value="P:'de novo' cotranslational protein folding"/>
    <property type="evidence" value="ECO:0007669"/>
    <property type="project" value="TreeGrafter"/>
</dbReference>
<dbReference type="GO" id="GO:0051301">
    <property type="term" value="P:cell division"/>
    <property type="evidence" value="ECO:0007669"/>
    <property type="project" value="UniProtKB-KW"/>
</dbReference>
<dbReference type="GO" id="GO:0061077">
    <property type="term" value="P:chaperone-mediated protein folding"/>
    <property type="evidence" value="ECO:0007669"/>
    <property type="project" value="TreeGrafter"/>
</dbReference>
<dbReference type="GO" id="GO:0015031">
    <property type="term" value="P:protein transport"/>
    <property type="evidence" value="ECO:0007669"/>
    <property type="project" value="UniProtKB-UniRule"/>
</dbReference>
<dbReference type="GO" id="GO:0043335">
    <property type="term" value="P:protein unfolding"/>
    <property type="evidence" value="ECO:0007669"/>
    <property type="project" value="TreeGrafter"/>
</dbReference>
<dbReference type="FunFam" id="3.10.50.40:FF:000001">
    <property type="entry name" value="Trigger factor"/>
    <property type="match status" value="1"/>
</dbReference>
<dbReference type="Gene3D" id="3.10.50.40">
    <property type="match status" value="1"/>
</dbReference>
<dbReference type="Gene3D" id="3.30.70.1050">
    <property type="entry name" value="Trigger factor ribosome-binding domain"/>
    <property type="match status" value="1"/>
</dbReference>
<dbReference type="Gene3D" id="1.10.3120.10">
    <property type="entry name" value="Trigger factor, C-terminal domain"/>
    <property type="match status" value="1"/>
</dbReference>
<dbReference type="HAMAP" id="MF_00303">
    <property type="entry name" value="Trigger_factor_Tig"/>
    <property type="match status" value="1"/>
</dbReference>
<dbReference type="InterPro" id="IPR046357">
    <property type="entry name" value="PPIase_dom_sf"/>
</dbReference>
<dbReference type="InterPro" id="IPR001179">
    <property type="entry name" value="PPIase_FKBP_dom"/>
</dbReference>
<dbReference type="InterPro" id="IPR005215">
    <property type="entry name" value="Trig_fac"/>
</dbReference>
<dbReference type="InterPro" id="IPR008880">
    <property type="entry name" value="Trigger_fac_C"/>
</dbReference>
<dbReference type="InterPro" id="IPR037041">
    <property type="entry name" value="Trigger_fac_C_sf"/>
</dbReference>
<dbReference type="InterPro" id="IPR008881">
    <property type="entry name" value="Trigger_fac_ribosome-bd_bac"/>
</dbReference>
<dbReference type="InterPro" id="IPR036611">
    <property type="entry name" value="Trigger_fac_ribosome-bd_sf"/>
</dbReference>
<dbReference type="InterPro" id="IPR027304">
    <property type="entry name" value="Trigger_fact/SurA_dom_sf"/>
</dbReference>
<dbReference type="NCBIfam" id="TIGR00115">
    <property type="entry name" value="tig"/>
    <property type="match status" value="1"/>
</dbReference>
<dbReference type="PANTHER" id="PTHR30560">
    <property type="entry name" value="TRIGGER FACTOR CHAPERONE AND PEPTIDYL-PROLYL CIS/TRANS ISOMERASE"/>
    <property type="match status" value="1"/>
</dbReference>
<dbReference type="PANTHER" id="PTHR30560:SF3">
    <property type="entry name" value="TRIGGER FACTOR-LIKE PROTEIN TIG, CHLOROPLASTIC"/>
    <property type="match status" value="1"/>
</dbReference>
<dbReference type="Pfam" id="PF00254">
    <property type="entry name" value="FKBP_C"/>
    <property type="match status" value="1"/>
</dbReference>
<dbReference type="Pfam" id="PF05698">
    <property type="entry name" value="Trigger_C"/>
    <property type="match status" value="1"/>
</dbReference>
<dbReference type="Pfam" id="PF05697">
    <property type="entry name" value="Trigger_N"/>
    <property type="match status" value="1"/>
</dbReference>
<dbReference type="PIRSF" id="PIRSF003095">
    <property type="entry name" value="Trigger_factor"/>
    <property type="match status" value="1"/>
</dbReference>
<dbReference type="SUPFAM" id="SSF54534">
    <property type="entry name" value="FKBP-like"/>
    <property type="match status" value="1"/>
</dbReference>
<dbReference type="SUPFAM" id="SSF109998">
    <property type="entry name" value="Triger factor/SurA peptide-binding domain-like"/>
    <property type="match status" value="1"/>
</dbReference>
<dbReference type="SUPFAM" id="SSF102735">
    <property type="entry name" value="Trigger factor ribosome-binding domain"/>
    <property type="match status" value="1"/>
</dbReference>
<dbReference type="PROSITE" id="PS50059">
    <property type="entry name" value="FKBP_PPIASE"/>
    <property type="match status" value="1"/>
</dbReference>
<accession>Q2SWQ8</accession>
<feature type="chain" id="PRO_0000256537" description="Trigger factor">
    <location>
        <begin position="1"/>
        <end position="449"/>
    </location>
</feature>
<feature type="domain" description="PPIase FKBP-type" evidence="1">
    <location>
        <begin position="173"/>
        <end position="258"/>
    </location>
</feature>